<evidence type="ECO:0000255" key="1">
    <source>
        <dbReference type="HAMAP-Rule" id="MF_00445"/>
    </source>
</evidence>
<evidence type="ECO:0000305" key="2"/>
<geneLocation type="plasmid">
    <name>pSymA</name>
    <name>megaplasmid 1</name>
</geneLocation>
<comment type="function">
    <text evidence="1">NDH-1 shuttles electrons from NADH, via FMN and iron-sulfur (Fe-S) centers, to quinones in the respiratory chain. The immediate electron acceptor for the enzyme in this species is believed to be ubiquinone. Couples the redox reaction to proton translocation (for every two electrons transferred, four hydrogen ions are translocated across the cytoplasmic membrane), and thus conserves the redox energy in a proton gradient.</text>
</comment>
<comment type="catalytic activity">
    <reaction evidence="1">
        <text>a quinone + NADH + 5 H(+)(in) = a quinol + NAD(+) + 4 H(+)(out)</text>
        <dbReference type="Rhea" id="RHEA:57888"/>
        <dbReference type="ChEBI" id="CHEBI:15378"/>
        <dbReference type="ChEBI" id="CHEBI:24646"/>
        <dbReference type="ChEBI" id="CHEBI:57540"/>
        <dbReference type="ChEBI" id="CHEBI:57945"/>
        <dbReference type="ChEBI" id="CHEBI:132124"/>
    </reaction>
</comment>
<comment type="subunit">
    <text evidence="1">NDH-1 is composed of 14 different subunits. Subunits NuoA, H, J, K, L, M, N constitute the membrane sector of the complex.</text>
</comment>
<comment type="subcellular location">
    <subcellularLocation>
        <location evidence="1">Cell inner membrane</location>
        <topology evidence="1">Multi-pass membrane protein</topology>
    </subcellularLocation>
</comment>
<comment type="similarity">
    <text evidence="1">Belongs to the complex I subunit 2 family.</text>
</comment>
<sequence>MTAAALLQWALASVPEIIVVTGACVLLIVGELVRKGRDDLLLWASVAIVLLAAVATLMLAGEMRPAYAGMFISDRFAVFFKLVFYLATILTFFLSRKYAEIEGIGRSEYYVLLLFALVGMMIMASAIDLLSIYVGLELMVLCTYVLTGFLRKERRSNEAALKYVILGAVSTAIFLYGVSLIYGLTGTTQLDRMAEAVSGGPLDPALLLAVVFIVAGLVFKIGAVPFHMWVPDVYEGAPTTITAFMSVAPKAAGFAVILRVFLNPLVEASNAWIIVAAIAVATMALGSFVALVQDNFKRLLAYSSIAHAGFAIFGVVAGGQDGIASVMLYLLIYTFMNLGIFGAVIMMRNGDFSGEVIEDYAGFAKFHPGLALLMLLYLFSLAGIPPTAGFFAKFYVLVALVERGFVALAVIAVLLSVVSAYFYIRIVMVIYMREPERAFEPALTPLVSATLAFTAAGTIGIGLFPAWFLRLAQQSAFGG</sequence>
<organism>
    <name type="scientific">Rhizobium meliloti (strain 1021)</name>
    <name type="common">Ensifer meliloti</name>
    <name type="synonym">Sinorhizobium meliloti</name>
    <dbReference type="NCBI Taxonomy" id="266834"/>
    <lineage>
        <taxon>Bacteria</taxon>
        <taxon>Pseudomonadati</taxon>
        <taxon>Pseudomonadota</taxon>
        <taxon>Alphaproteobacteria</taxon>
        <taxon>Hyphomicrobiales</taxon>
        <taxon>Rhizobiaceae</taxon>
        <taxon>Sinorhizobium/Ensifer group</taxon>
        <taxon>Sinorhizobium</taxon>
    </lineage>
</organism>
<feature type="chain" id="PRO_0000117695" description="NADH-quinone oxidoreductase subunit N 2">
    <location>
        <begin position="1"/>
        <end position="479"/>
    </location>
</feature>
<feature type="transmembrane region" description="Helical" evidence="1">
    <location>
        <begin position="9"/>
        <end position="29"/>
    </location>
</feature>
<feature type="transmembrane region" description="Helical" evidence="1">
    <location>
        <begin position="40"/>
        <end position="60"/>
    </location>
</feature>
<feature type="transmembrane region" description="Helical" evidence="1">
    <location>
        <begin position="75"/>
        <end position="95"/>
    </location>
</feature>
<feature type="transmembrane region" description="Helical" evidence="1">
    <location>
        <begin position="110"/>
        <end position="130"/>
    </location>
</feature>
<feature type="transmembrane region" description="Helical" evidence="1">
    <location>
        <begin position="131"/>
        <end position="151"/>
    </location>
</feature>
<feature type="transmembrane region" description="Helical" evidence="1">
    <location>
        <begin position="164"/>
        <end position="184"/>
    </location>
</feature>
<feature type="transmembrane region" description="Helical" evidence="1">
    <location>
        <begin position="206"/>
        <end position="226"/>
    </location>
</feature>
<feature type="transmembrane region" description="Helical" evidence="1">
    <location>
        <begin position="238"/>
        <end position="258"/>
    </location>
</feature>
<feature type="transmembrane region" description="Helical" evidence="1">
    <location>
        <begin position="272"/>
        <end position="292"/>
    </location>
</feature>
<feature type="transmembrane region" description="Helical" evidence="1">
    <location>
        <begin position="299"/>
        <end position="319"/>
    </location>
</feature>
<feature type="transmembrane region" description="Helical" evidence="1">
    <location>
        <begin position="326"/>
        <end position="346"/>
    </location>
</feature>
<feature type="transmembrane region" description="Helical" evidence="1">
    <location>
        <begin position="371"/>
        <end position="391"/>
    </location>
</feature>
<feature type="transmembrane region" description="Helical" evidence="1">
    <location>
        <begin position="404"/>
        <end position="424"/>
    </location>
</feature>
<feature type="transmembrane region" description="Helical" evidence="1">
    <location>
        <begin position="449"/>
        <end position="469"/>
    </location>
</feature>
<feature type="sequence conflict" description="In Ref. 1; CAB51628." evidence="2" ref="1">
    <original>V</original>
    <variation>I</variation>
    <location>
        <position position="14"/>
    </location>
</feature>
<keyword id="KW-0997">Cell inner membrane</keyword>
<keyword id="KW-1003">Cell membrane</keyword>
<keyword id="KW-0472">Membrane</keyword>
<keyword id="KW-0520">NAD</keyword>
<keyword id="KW-0614">Plasmid</keyword>
<keyword id="KW-0874">Quinone</keyword>
<keyword id="KW-1185">Reference proteome</keyword>
<keyword id="KW-1278">Translocase</keyword>
<keyword id="KW-0812">Transmembrane</keyword>
<keyword id="KW-1133">Transmembrane helix</keyword>
<keyword id="KW-0813">Transport</keyword>
<keyword id="KW-0830">Ubiquinone</keyword>
<accession>P56911</accession>
<proteinExistence type="inferred from homology"/>
<gene>
    <name evidence="1" type="primary">nuoN2</name>
    <name type="ordered locus">RA0835</name>
    <name type="ORF">SMa1535</name>
</gene>
<dbReference type="EC" id="7.1.1.-" evidence="1"/>
<dbReference type="EMBL" id="AJ245399">
    <property type="protein sequence ID" value="CAB51628.2"/>
    <property type="molecule type" value="Genomic_DNA"/>
</dbReference>
<dbReference type="EMBL" id="AE006469">
    <property type="protein sequence ID" value="AAK65493.1"/>
    <property type="molecule type" value="Genomic_DNA"/>
</dbReference>
<dbReference type="PIR" id="C95366">
    <property type="entry name" value="C95366"/>
</dbReference>
<dbReference type="RefSeq" id="NP_436081.1">
    <property type="nucleotide sequence ID" value="NC_003037.1"/>
</dbReference>
<dbReference type="RefSeq" id="WP_010967803.1">
    <property type="nucleotide sequence ID" value="NC_003037.1"/>
</dbReference>
<dbReference type="SMR" id="P56911"/>
<dbReference type="EnsemblBacteria" id="AAK65493">
    <property type="protein sequence ID" value="AAK65493"/>
    <property type="gene ID" value="SMa1535"/>
</dbReference>
<dbReference type="KEGG" id="sme:SMa1535"/>
<dbReference type="PATRIC" id="fig|266834.11.peg.867"/>
<dbReference type="HOGENOM" id="CLU_007100_1_5_5"/>
<dbReference type="OrthoDB" id="9811718at2"/>
<dbReference type="Proteomes" id="UP000001976">
    <property type="component" value="Plasmid pSymA"/>
</dbReference>
<dbReference type="GO" id="GO:0005886">
    <property type="term" value="C:plasma membrane"/>
    <property type="evidence" value="ECO:0007669"/>
    <property type="project" value="UniProtKB-SubCell"/>
</dbReference>
<dbReference type="GO" id="GO:0008137">
    <property type="term" value="F:NADH dehydrogenase (ubiquinone) activity"/>
    <property type="evidence" value="ECO:0007669"/>
    <property type="project" value="InterPro"/>
</dbReference>
<dbReference type="GO" id="GO:0050136">
    <property type="term" value="F:NADH:ubiquinone reductase (non-electrogenic) activity"/>
    <property type="evidence" value="ECO:0007669"/>
    <property type="project" value="UniProtKB-UniRule"/>
</dbReference>
<dbReference type="GO" id="GO:0048038">
    <property type="term" value="F:quinone binding"/>
    <property type="evidence" value="ECO:0007669"/>
    <property type="project" value="UniProtKB-KW"/>
</dbReference>
<dbReference type="GO" id="GO:0042773">
    <property type="term" value="P:ATP synthesis coupled electron transport"/>
    <property type="evidence" value="ECO:0007669"/>
    <property type="project" value="InterPro"/>
</dbReference>
<dbReference type="HAMAP" id="MF_00445">
    <property type="entry name" value="NDH1_NuoN_1"/>
    <property type="match status" value="1"/>
</dbReference>
<dbReference type="InterPro" id="IPR010096">
    <property type="entry name" value="NADH-Q_OxRdtase_suN/2"/>
</dbReference>
<dbReference type="InterPro" id="IPR001750">
    <property type="entry name" value="ND/Mrp_TM"/>
</dbReference>
<dbReference type="NCBIfam" id="TIGR01770">
    <property type="entry name" value="NDH_I_N"/>
    <property type="match status" value="1"/>
</dbReference>
<dbReference type="PANTHER" id="PTHR22773">
    <property type="entry name" value="NADH DEHYDROGENASE"/>
    <property type="match status" value="1"/>
</dbReference>
<dbReference type="Pfam" id="PF00361">
    <property type="entry name" value="Proton_antipo_M"/>
    <property type="match status" value="1"/>
</dbReference>
<reference key="1">
    <citation type="submission" date="2000-10" db="EMBL/GenBank/DDBJ databases">
        <title>Rhizobium meliloti carries two sets of nuo genes.</title>
        <authorList>
            <person name="Putnoky P."/>
            <person name="Jady B."/>
            <person name="Chellapilla K.P."/>
            <person name="Barta F."/>
            <person name="Kiss E."/>
        </authorList>
    </citation>
    <scope>NUCLEOTIDE SEQUENCE [GENOMIC DNA]</scope>
    <source>
        <strain>41</strain>
    </source>
</reference>
<reference key="2">
    <citation type="journal article" date="2001" name="Proc. Natl. Acad. Sci. U.S.A.">
        <title>Nucleotide sequence and predicted functions of the entire Sinorhizobium meliloti pSymA megaplasmid.</title>
        <authorList>
            <person name="Barnett M.J."/>
            <person name="Fisher R.F."/>
            <person name="Jones T."/>
            <person name="Komp C."/>
            <person name="Abola A.P."/>
            <person name="Barloy-Hubler F."/>
            <person name="Bowser L."/>
            <person name="Capela D."/>
            <person name="Galibert F."/>
            <person name="Gouzy J."/>
            <person name="Gurjal M."/>
            <person name="Hong A."/>
            <person name="Huizar L."/>
            <person name="Hyman R.W."/>
            <person name="Kahn D."/>
            <person name="Kahn M.L."/>
            <person name="Kalman S."/>
            <person name="Keating D.H."/>
            <person name="Palm C."/>
            <person name="Peck M.C."/>
            <person name="Surzycki R."/>
            <person name="Wells D.H."/>
            <person name="Yeh K.-C."/>
            <person name="Davis R.W."/>
            <person name="Federspiel N.A."/>
            <person name="Long S.R."/>
        </authorList>
    </citation>
    <scope>NUCLEOTIDE SEQUENCE [LARGE SCALE GENOMIC DNA]</scope>
    <source>
        <strain>1021</strain>
    </source>
</reference>
<reference key="3">
    <citation type="journal article" date="2001" name="Science">
        <title>The composite genome of the legume symbiont Sinorhizobium meliloti.</title>
        <authorList>
            <person name="Galibert F."/>
            <person name="Finan T.M."/>
            <person name="Long S.R."/>
            <person name="Puehler A."/>
            <person name="Abola P."/>
            <person name="Ampe F."/>
            <person name="Barloy-Hubler F."/>
            <person name="Barnett M.J."/>
            <person name="Becker A."/>
            <person name="Boistard P."/>
            <person name="Bothe G."/>
            <person name="Boutry M."/>
            <person name="Bowser L."/>
            <person name="Buhrmester J."/>
            <person name="Cadieu E."/>
            <person name="Capela D."/>
            <person name="Chain P."/>
            <person name="Cowie A."/>
            <person name="Davis R.W."/>
            <person name="Dreano S."/>
            <person name="Federspiel N.A."/>
            <person name="Fisher R.F."/>
            <person name="Gloux S."/>
            <person name="Godrie T."/>
            <person name="Goffeau A."/>
            <person name="Golding B."/>
            <person name="Gouzy J."/>
            <person name="Gurjal M."/>
            <person name="Hernandez-Lucas I."/>
            <person name="Hong A."/>
            <person name="Huizar L."/>
            <person name="Hyman R.W."/>
            <person name="Jones T."/>
            <person name="Kahn D."/>
            <person name="Kahn M.L."/>
            <person name="Kalman S."/>
            <person name="Keating D.H."/>
            <person name="Kiss E."/>
            <person name="Komp C."/>
            <person name="Lelaure V."/>
            <person name="Masuy D."/>
            <person name="Palm C."/>
            <person name="Peck M.C."/>
            <person name="Pohl T.M."/>
            <person name="Portetelle D."/>
            <person name="Purnelle B."/>
            <person name="Ramsperger U."/>
            <person name="Surzycki R."/>
            <person name="Thebault P."/>
            <person name="Vandenbol M."/>
            <person name="Vorhoelter F.J."/>
            <person name="Weidner S."/>
            <person name="Wells D.H."/>
            <person name="Wong K."/>
            <person name="Yeh K.-C."/>
            <person name="Batut J."/>
        </authorList>
    </citation>
    <scope>NUCLEOTIDE SEQUENCE [LARGE SCALE GENOMIC DNA]</scope>
    <source>
        <strain>1021</strain>
    </source>
</reference>
<name>NUON2_RHIME</name>
<protein>
    <recommendedName>
        <fullName evidence="1">NADH-quinone oxidoreductase subunit N 2</fullName>
        <ecNumber evidence="1">7.1.1.-</ecNumber>
    </recommendedName>
    <alternativeName>
        <fullName evidence="1">NADH dehydrogenase I subunit N 2</fullName>
    </alternativeName>
    <alternativeName>
        <fullName evidence="1">NDH-1 subunit N 2</fullName>
    </alternativeName>
</protein>